<reference key="1">
    <citation type="journal article" date="2011" name="Stand. Genomic Sci.">
        <title>Complete genome sequence of 'Enterobacter lignolyticus' SCF1.</title>
        <authorList>
            <person name="Deangelis K.M."/>
            <person name="D'Haeseleer P."/>
            <person name="Chivian D."/>
            <person name="Fortney J.L."/>
            <person name="Khudyakov J."/>
            <person name="Simmons B."/>
            <person name="Woo H."/>
            <person name="Arkin A.P."/>
            <person name="Davenport K.W."/>
            <person name="Goodwin L."/>
            <person name="Chen A."/>
            <person name="Ivanova N."/>
            <person name="Kyrpides N.C."/>
            <person name="Mavromatis K."/>
            <person name="Woyke T."/>
            <person name="Hazen T.C."/>
        </authorList>
    </citation>
    <scope>NUCLEOTIDE SEQUENCE [LARGE SCALE GENOMIC DNA]</scope>
    <source>
        <strain>SCF1</strain>
    </source>
</reference>
<dbReference type="EC" id="2.7.4.23" evidence="1"/>
<dbReference type="EMBL" id="CP002272">
    <property type="protein sequence ID" value="ADO50308.1"/>
    <property type="molecule type" value="Genomic_DNA"/>
</dbReference>
<dbReference type="RefSeq" id="WP_013368024.1">
    <property type="nucleotide sequence ID" value="NC_014618.1"/>
</dbReference>
<dbReference type="SMR" id="E3G1M3"/>
<dbReference type="STRING" id="701347.Entcl_4075"/>
<dbReference type="KEGG" id="esc:Entcl_4075"/>
<dbReference type="eggNOG" id="COG3709">
    <property type="taxonomic scope" value="Bacteria"/>
</dbReference>
<dbReference type="HOGENOM" id="CLU_102477_0_0_6"/>
<dbReference type="UniPathway" id="UPA00087">
    <property type="reaction ID" value="UER00175"/>
</dbReference>
<dbReference type="Proteomes" id="UP000006872">
    <property type="component" value="Chromosome"/>
</dbReference>
<dbReference type="GO" id="GO:0005524">
    <property type="term" value="F:ATP binding"/>
    <property type="evidence" value="ECO:0007669"/>
    <property type="project" value="UniProtKB-KW"/>
</dbReference>
<dbReference type="GO" id="GO:0033863">
    <property type="term" value="F:ribose 1,5-bisphosphate phosphokinase activity"/>
    <property type="evidence" value="ECO:0007669"/>
    <property type="project" value="UniProtKB-UniRule"/>
</dbReference>
<dbReference type="GO" id="GO:0006015">
    <property type="term" value="P:5-phosphoribose 1-diphosphate biosynthetic process"/>
    <property type="evidence" value="ECO:0007669"/>
    <property type="project" value="UniProtKB-UniRule"/>
</dbReference>
<dbReference type="GO" id="GO:0019634">
    <property type="term" value="P:organic phosphonate metabolic process"/>
    <property type="evidence" value="ECO:0007669"/>
    <property type="project" value="UniProtKB-UniRule"/>
</dbReference>
<dbReference type="FunFam" id="3.40.50.300:FF:000979">
    <property type="entry name" value="Ribose 1,5-bisphosphate phosphokinase PhnN"/>
    <property type="match status" value="1"/>
</dbReference>
<dbReference type="Gene3D" id="3.40.50.300">
    <property type="entry name" value="P-loop containing nucleotide triphosphate hydrolases"/>
    <property type="match status" value="1"/>
</dbReference>
<dbReference type="HAMAP" id="MF_00836">
    <property type="entry name" value="PhnN"/>
    <property type="match status" value="1"/>
</dbReference>
<dbReference type="InterPro" id="IPR008145">
    <property type="entry name" value="GK/Ca_channel_bsu"/>
</dbReference>
<dbReference type="InterPro" id="IPR027417">
    <property type="entry name" value="P-loop_NTPase"/>
</dbReference>
<dbReference type="InterPro" id="IPR012699">
    <property type="entry name" value="PhnN"/>
</dbReference>
<dbReference type="NCBIfam" id="TIGR02322">
    <property type="entry name" value="phosphon_PhnN"/>
    <property type="match status" value="1"/>
</dbReference>
<dbReference type="NCBIfam" id="NF007485">
    <property type="entry name" value="PRK10078.1"/>
    <property type="match status" value="1"/>
</dbReference>
<dbReference type="Pfam" id="PF13238">
    <property type="entry name" value="AAA_18"/>
    <property type="match status" value="1"/>
</dbReference>
<dbReference type="SMART" id="SM00072">
    <property type="entry name" value="GuKc"/>
    <property type="match status" value="1"/>
</dbReference>
<dbReference type="SUPFAM" id="SSF52540">
    <property type="entry name" value="P-loop containing nucleoside triphosphate hydrolases"/>
    <property type="match status" value="1"/>
</dbReference>
<gene>
    <name evidence="1" type="primary">phnN</name>
    <name type="ordered locus">Entcl_4075</name>
</gene>
<organism>
    <name type="scientific">Enterobacter lignolyticus (strain SCF1)</name>
    <dbReference type="NCBI Taxonomy" id="701347"/>
    <lineage>
        <taxon>Bacteria</taxon>
        <taxon>Pseudomonadati</taxon>
        <taxon>Pseudomonadota</taxon>
        <taxon>Gammaproteobacteria</taxon>
        <taxon>Enterobacterales</taxon>
        <taxon>Enterobacteriaceae</taxon>
        <taxon>Pluralibacter</taxon>
    </lineage>
</organism>
<comment type="function">
    <text evidence="1">Catalyzes the phosphorylation of ribose 1,5-bisphosphate to 5-phospho-D-ribosyl alpha-1-diphosphate (PRPP).</text>
</comment>
<comment type="catalytic activity">
    <reaction evidence="1">
        <text>alpha-D-ribose 1,5-bisphosphate + ATP = 5-phospho-alpha-D-ribose 1-diphosphate + ADP</text>
        <dbReference type="Rhea" id="RHEA:20109"/>
        <dbReference type="ChEBI" id="CHEBI:30616"/>
        <dbReference type="ChEBI" id="CHEBI:58017"/>
        <dbReference type="ChEBI" id="CHEBI:68688"/>
        <dbReference type="ChEBI" id="CHEBI:456216"/>
        <dbReference type="EC" id="2.7.4.23"/>
    </reaction>
</comment>
<comment type="pathway">
    <text evidence="1">Metabolic intermediate biosynthesis; 5-phospho-alpha-D-ribose 1-diphosphate biosynthesis; 5-phospho-alpha-D-ribose 1-diphosphate from D-ribose 5-phosphate (route II): step 3/3.</text>
</comment>
<comment type="similarity">
    <text evidence="1">Belongs to the ribose 1,5-bisphosphokinase family.</text>
</comment>
<keyword id="KW-0067">ATP-binding</keyword>
<keyword id="KW-0547">Nucleotide-binding</keyword>
<keyword id="KW-1185">Reference proteome</keyword>
<keyword id="KW-0808">Transferase</keyword>
<accession>E3G1M3</accession>
<sequence>MTGKLIWLVGPSGSGKDSLLEALRKQEHPQMLVAHRYITRPAGAGCENHVALSEHEFFTRAAQHLFALSWHANNLYYGVGMEIDLWLHAGLDVVVNGSRAHLPQAKARYGESLLPVCLQVSPDILRQRLEQRGRENALEIAQRLERAARYTPQQCVMLNNDGSLLQSVEMFLHLIRTHGNHKESQHACL</sequence>
<protein>
    <recommendedName>
        <fullName evidence="1">Ribose 1,5-bisphosphate phosphokinase PhnN</fullName>
        <ecNumber evidence="1">2.7.4.23</ecNumber>
    </recommendedName>
    <alternativeName>
        <fullName evidence="1">Ribose 1,5-bisphosphokinase</fullName>
    </alternativeName>
</protein>
<name>PHNN_ENTLS</name>
<feature type="chain" id="PRO_0000412782" description="Ribose 1,5-bisphosphate phosphokinase PhnN">
    <location>
        <begin position="1"/>
        <end position="189"/>
    </location>
</feature>
<feature type="binding site" evidence="1">
    <location>
        <begin position="10"/>
        <end position="17"/>
    </location>
    <ligand>
        <name>ATP</name>
        <dbReference type="ChEBI" id="CHEBI:30616"/>
    </ligand>
</feature>
<evidence type="ECO:0000255" key="1">
    <source>
        <dbReference type="HAMAP-Rule" id="MF_00836"/>
    </source>
</evidence>
<proteinExistence type="inferred from homology"/>